<accession>Q55D66</accession>
<gene>
    <name type="primary">psmB3</name>
    <name type="ORF">DDB_G0269772</name>
</gene>
<proteinExistence type="inferred from homology"/>
<feature type="chain" id="PRO_0000328480" description="Proteasome subunit beta type-3">
    <location>
        <begin position="1"/>
        <end position="205"/>
    </location>
</feature>
<comment type="function">
    <text evidence="1">Non-catalytic component of the proteasome, a multicatalytic proteinase complex which is characterized by its ability to cleave peptides with Arg, Phe, Tyr, Leu, and Glu adjacent to the leaving group at neutral or slightly basic pH. The proteasome has an ATP-dependent proteolytic activity (By similarity).</text>
</comment>
<comment type="subunit">
    <text evidence="1">The 26S proteasome consists of a 20S proteasome core and two 19S regulatory subunits. The 20S proteasome core is composed of 28 subunits that are arranged in four stacked rings, resulting in a barrel-shaped structure. The two end rings are each formed by seven alpha subunits, and the two central rings are each formed by seven beta subunits. The catalytic chamber with the active sites is on the inside of the barrel (By similarity).</text>
</comment>
<comment type="subcellular location">
    <subcellularLocation>
        <location evidence="2">Cytoplasm</location>
    </subcellularLocation>
    <subcellularLocation>
        <location evidence="1">Nucleus</location>
    </subcellularLocation>
</comment>
<comment type="similarity">
    <text evidence="2">Belongs to the peptidase T1B family.</text>
</comment>
<evidence type="ECO:0000250" key="1"/>
<evidence type="ECO:0000255" key="2">
    <source>
        <dbReference type="PROSITE-ProRule" id="PRU00809"/>
    </source>
</evidence>
<dbReference type="EMBL" id="AAFI02000005">
    <property type="protein sequence ID" value="EAL72236.1"/>
    <property type="molecule type" value="Genomic_DNA"/>
</dbReference>
<dbReference type="RefSeq" id="XP_646265.1">
    <property type="nucleotide sequence ID" value="XM_641173.1"/>
</dbReference>
<dbReference type="SMR" id="Q55D66"/>
<dbReference type="FunCoup" id="Q55D66">
    <property type="interactions" value="1220"/>
</dbReference>
<dbReference type="STRING" id="44689.Q55D66"/>
<dbReference type="MEROPS" id="T01.P02"/>
<dbReference type="PaxDb" id="44689-DDB0232932"/>
<dbReference type="EnsemblProtists" id="EAL72236">
    <property type="protein sequence ID" value="EAL72236"/>
    <property type="gene ID" value="DDB_G0269772"/>
</dbReference>
<dbReference type="GeneID" id="8617221"/>
<dbReference type="KEGG" id="ddi:DDB_G0269772"/>
<dbReference type="dictyBase" id="DDB_G0269772">
    <property type="gene designation" value="psmB3"/>
</dbReference>
<dbReference type="VEuPathDB" id="AmoebaDB:DDB_G0269772"/>
<dbReference type="eggNOG" id="KOG0180">
    <property type="taxonomic scope" value="Eukaryota"/>
</dbReference>
<dbReference type="HOGENOM" id="CLU_035750_10_0_1"/>
<dbReference type="InParanoid" id="Q55D66"/>
<dbReference type="OMA" id="CSEQLYG"/>
<dbReference type="PhylomeDB" id="Q55D66"/>
<dbReference type="Reactome" id="R-DDI-1236978">
    <property type="pathway name" value="Cross-presentation of soluble exogenous antigens (endosomes)"/>
</dbReference>
<dbReference type="Reactome" id="R-DDI-174084">
    <property type="pathway name" value="Autodegradation of Cdh1 by Cdh1:APC/C"/>
</dbReference>
<dbReference type="Reactome" id="R-DDI-174154">
    <property type="pathway name" value="APC/C:Cdc20 mediated degradation of Securin"/>
</dbReference>
<dbReference type="Reactome" id="R-DDI-174178">
    <property type="pathway name" value="APC/C:Cdh1 mediated degradation of Cdc20 and other APC/C:Cdh1 targeted proteins in late mitosis/early G1"/>
</dbReference>
<dbReference type="Reactome" id="R-DDI-2467813">
    <property type="pathway name" value="Separation of Sister Chromatids"/>
</dbReference>
<dbReference type="Reactome" id="R-DDI-349425">
    <property type="pathway name" value="Autodegradation of the E3 ubiquitin ligase COP1"/>
</dbReference>
<dbReference type="Reactome" id="R-DDI-382556">
    <property type="pathway name" value="ABC-family proteins mediated transport"/>
</dbReference>
<dbReference type="Reactome" id="R-DDI-450408">
    <property type="pathway name" value="AUF1 (hnRNP D0) binds and destabilizes mRNA"/>
</dbReference>
<dbReference type="Reactome" id="R-DDI-4641258">
    <property type="pathway name" value="Degradation of DVL"/>
</dbReference>
<dbReference type="Reactome" id="R-DDI-5632684">
    <property type="pathway name" value="Hedgehog 'on' state"/>
</dbReference>
<dbReference type="Reactome" id="R-DDI-5658442">
    <property type="pathway name" value="Regulation of RAS by GAPs"/>
</dbReference>
<dbReference type="Reactome" id="R-DDI-5687128">
    <property type="pathway name" value="MAPK6/MAPK4 signaling"/>
</dbReference>
<dbReference type="Reactome" id="R-DDI-5689603">
    <property type="pathway name" value="UCH proteinases"/>
</dbReference>
<dbReference type="Reactome" id="R-DDI-5689880">
    <property type="pathway name" value="Ub-specific processing proteases"/>
</dbReference>
<dbReference type="Reactome" id="R-DDI-68949">
    <property type="pathway name" value="Orc1 removal from chromatin"/>
</dbReference>
<dbReference type="Reactome" id="R-DDI-69017">
    <property type="pathway name" value="CDK-mediated phosphorylation and removal of Cdc6"/>
</dbReference>
<dbReference type="Reactome" id="R-DDI-69601">
    <property type="pathway name" value="Ubiquitin Mediated Degradation of Phosphorylated Cdc25A"/>
</dbReference>
<dbReference type="Reactome" id="R-DDI-8854050">
    <property type="pathway name" value="FBXL7 down-regulates AURKA during mitotic entry and in early mitosis"/>
</dbReference>
<dbReference type="Reactome" id="R-DDI-8948751">
    <property type="pathway name" value="Regulation of PTEN stability and activity"/>
</dbReference>
<dbReference type="Reactome" id="R-DDI-8951664">
    <property type="pathway name" value="Neddylation"/>
</dbReference>
<dbReference type="Reactome" id="R-DDI-9755511">
    <property type="pathway name" value="KEAP1-NFE2L2 pathway"/>
</dbReference>
<dbReference type="Reactome" id="R-DDI-983168">
    <property type="pathway name" value="Antigen processing: Ubiquitination &amp; Proteasome degradation"/>
</dbReference>
<dbReference type="Reactome" id="R-DDI-9907900">
    <property type="pathway name" value="Proteasome assembly"/>
</dbReference>
<dbReference type="PRO" id="PR:Q55D66"/>
<dbReference type="Proteomes" id="UP000002195">
    <property type="component" value="Chromosome 1"/>
</dbReference>
<dbReference type="GO" id="GO:0005737">
    <property type="term" value="C:cytoplasm"/>
    <property type="evidence" value="ECO:0000353"/>
    <property type="project" value="dictyBase"/>
</dbReference>
<dbReference type="GO" id="GO:0005829">
    <property type="term" value="C:cytosol"/>
    <property type="evidence" value="ECO:0000318"/>
    <property type="project" value="GO_Central"/>
</dbReference>
<dbReference type="GO" id="GO:0005634">
    <property type="term" value="C:nucleus"/>
    <property type="evidence" value="ECO:0000353"/>
    <property type="project" value="dictyBase"/>
</dbReference>
<dbReference type="GO" id="GO:0019774">
    <property type="term" value="C:proteasome core complex, beta-subunit complex"/>
    <property type="evidence" value="ECO:0000314"/>
    <property type="project" value="dictyBase"/>
</dbReference>
<dbReference type="GO" id="GO:0010498">
    <property type="term" value="P:proteasomal protein catabolic process"/>
    <property type="evidence" value="ECO:0000314"/>
    <property type="project" value="dictyBase"/>
</dbReference>
<dbReference type="GO" id="GO:0043161">
    <property type="term" value="P:proteasome-mediated ubiquitin-dependent protein catabolic process"/>
    <property type="evidence" value="ECO:0000318"/>
    <property type="project" value="GO_Central"/>
</dbReference>
<dbReference type="CDD" id="cd03759">
    <property type="entry name" value="proteasome_beta_type_3"/>
    <property type="match status" value="1"/>
</dbReference>
<dbReference type="FunFam" id="3.60.20.10:FF:000003">
    <property type="entry name" value="Proteasome subunit beta type-3"/>
    <property type="match status" value="1"/>
</dbReference>
<dbReference type="Gene3D" id="3.60.20.10">
    <property type="entry name" value="Glutamine Phosphoribosylpyrophosphate, subunit 1, domain 1"/>
    <property type="match status" value="1"/>
</dbReference>
<dbReference type="InterPro" id="IPR029055">
    <property type="entry name" value="Ntn_hydrolases_N"/>
</dbReference>
<dbReference type="InterPro" id="IPR033811">
    <property type="entry name" value="Proteasome_beta_3"/>
</dbReference>
<dbReference type="InterPro" id="IPR001353">
    <property type="entry name" value="Proteasome_sua/b"/>
</dbReference>
<dbReference type="InterPro" id="IPR023333">
    <property type="entry name" value="Proteasome_suB-type"/>
</dbReference>
<dbReference type="PANTHER" id="PTHR32194">
    <property type="entry name" value="METALLOPROTEASE TLDD"/>
    <property type="match status" value="1"/>
</dbReference>
<dbReference type="PANTHER" id="PTHR32194:SF10">
    <property type="entry name" value="PROTEASOME SUBUNIT BETA TYPE-3"/>
    <property type="match status" value="1"/>
</dbReference>
<dbReference type="Pfam" id="PF00227">
    <property type="entry name" value="Proteasome"/>
    <property type="match status" value="1"/>
</dbReference>
<dbReference type="SUPFAM" id="SSF56235">
    <property type="entry name" value="N-terminal nucleophile aminohydrolases (Ntn hydrolases)"/>
    <property type="match status" value="1"/>
</dbReference>
<dbReference type="PROSITE" id="PS51476">
    <property type="entry name" value="PROTEASOME_BETA_2"/>
    <property type="match status" value="1"/>
</dbReference>
<sequence length="205" mass="22816">MSIMAYNGGACIVMVGKNCVAIASDLRFGIQQQTISNDFPKVYRINDKCFVGISGLVTDAQTLYQKLVFRHNLYKLREERDMSPRVVSNLLTNMLYEKRFGPYFTEPLICGLEGPDNTPFISGMDLIGASVATDDFLVVGTMTPAMYGVCETLYKKDMNEDDLFETISQCMLASLDRDALSGWGAIVHVITPTQVITKKLLGRQD</sequence>
<reference key="1">
    <citation type="journal article" date="2005" name="Nature">
        <title>The genome of the social amoeba Dictyostelium discoideum.</title>
        <authorList>
            <person name="Eichinger L."/>
            <person name="Pachebat J.A."/>
            <person name="Gloeckner G."/>
            <person name="Rajandream M.A."/>
            <person name="Sucgang R."/>
            <person name="Berriman M."/>
            <person name="Song J."/>
            <person name="Olsen R."/>
            <person name="Szafranski K."/>
            <person name="Xu Q."/>
            <person name="Tunggal B."/>
            <person name="Kummerfeld S."/>
            <person name="Madera M."/>
            <person name="Konfortov B.A."/>
            <person name="Rivero F."/>
            <person name="Bankier A.T."/>
            <person name="Lehmann R."/>
            <person name="Hamlin N."/>
            <person name="Davies R."/>
            <person name="Gaudet P."/>
            <person name="Fey P."/>
            <person name="Pilcher K."/>
            <person name="Chen G."/>
            <person name="Saunders D."/>
            <person name="Sodergren E.J."/>
            <person name="Davis P."/>
            <person name="Kerhornou A."/>
            <person name="Nie X."/>
            <person name="Hall N."/>
            <person name="Anjard C."/>
            <person name="Hemphill L."/>
            <person name="Bason N."/>
            <person name="Farbrother P."/>
            <person name="Desany B."/>
            <person name="Just E."/>
            <person name="Morio T."/>
            <person name="Rost R."/>
            <person name="Churcher C.M."/>
            <person name="Cooper J."/>
            <person name="Haydock S."/>
            <person name="van Driessche N."/>
            <person name="Cronin A."/>
            <person name="Goodhead I."/>
            <person name="Muzny D.M."/>
            <person name="Mourier T."/>
            <person name="Pain A."/>
            <person name="Lu M."/>
            <person name="Harper D."/>
            <person name="Lindsay R."/>
            <person name="Hauser H."/>
            <person name="James K.D."/>
            <person name="Quiles M."/>
            <person name="Madan Babu M."/>
            <person name="Saito T."/>
            <person name="Buchrieser C."/>
            <person name="Wardroper A."/>
            <person name="Felder M."/>
            <person name="Thangavelu M."/>
            <person name="Johnson D."/>
            <person name="Knights A."/>
            <person name="Loulseged H."/>
            <person name="Mungall K.L."/>
            <person name="Oliver K."/>
            <person name="Price C."/>
            <person name="Quail M.A."/>
            <person name="Urushihara H."/>
            <person name="Hernandez J."/>
            <person name="Rabbinowitsch E."/>
            <person name="Steffen D."/>
            <person name="Sanders M."/>
            <person name="Ma J."/>
            <person name="Kohara Y."/>
            <person name="Sharp S."/>
            <person name="Simmonds M.N."/>
            <person name="Spiegler S."/>
            <person name="Tivey A."/>
            <person name="Sugano S."/>
            <person name="White B."/>
            <person name="Walker D."/>
            <person name="Woodward J.R."/>
            <person name="Winckler T."/>
            <person name="Tanaka Y."/>
            <person name="Shaulsky G."/>
            <person name="Schleicher M."/>
            <person name="Weinstock G.M."/>
            <person name="Rosenthal A."/>
            <person name="Cox E.C."/>
            <person name="Chisholm R.L."/>
            <person name="Gibbs R.A."/>
            <person name="Loomis W.F."/>
            <person name="Platzer M."/>
            <person name="Kay R.R."/>
            <person name="Williams J.G."/>
            <person name="Dear P.H."/>
            <person name="Noegel A.A."/>
            <person name="Barrell B.G."/>
            <person name="Kuspa A."/>
        </authorList>
    </citation>
    <scope>NUCLEOTIDE SEQUENCE [LARGE SCALE GENOMIC DNA]</scope>
    <source>
        <strain>AX4</strain>
    </source>
</reference>
<keyword id="KW-0963">Cytoplasm</keyword>
<keyword id="KW-0539">Nucleus</keyword>
<keyword id="KW-0647">Proteasome</keyword>
<keyword id="KW-1185">Reference proteome</keyword>
<organism>
    <name type="scientific">Dictyostelium discoideum</name>
    <name type="common">Social amoeba</name>
    <dbReference type="NCBI Taxonomy" id="44689"/>
    <lineage>
        <taxon>Eukaryota</taxon>
        <taxon>Amoebozoa</taxon>
        <taxon>Evosea</taxon>
        <taxon>Eumycetozoa</taxon>
        <taxon>Dictyostelia</taxon>
        <taxon>Dictyosteliales</taxon>
        <taxon>Dictyosteliaceae</taxon>
        <taxon>Dictyostelium</taxon>
    </lineage>
</organism>
<protein>
    <recommendedName>
        <fullName>Proteasome subunit beta type-3</fullName>
    </recommendedName>
</protein>
<name>PSB3_DICDI</name>